<proteinExistence type="inferred from homology"/>
<name>RS10_EHRRG</name>
<feature type="chain" id="PRO_0000237042" description="Small ribosomal subunit protein uS10">
    <location>
        <begin position="1"/>
        <end position="110"/>
    </location>
</feature>
<protein>
    <recommendedName>
        <fullName evidence="1">Small ribosomal subunit protein uS10</fullName>
    </recommendedName>
    <alternativeName>
        <fullName evidence="2">30S ribosomal protein S10</fullName>
    </alternativeName>
</protein>
<gene>
    <name evidence="1" type="primary">rpsJ</name>
    <name type="ordered locus">ERGA_CDS_06300</name>
</gene>
<dbReference type="EMBL" id="CR925677">
    <property type="protein sequence ID" value="CAI28082.1"/>
    <property type="molecule type" value="Genomic_DNA"/>
</dbReference>
<dbReference type="SMR" id="Q5FFT9"/>
<dbReference type="KEGG" id="erg:ERGA_CDS_06300"/>
<dbReference type="HOGENOM" id="CLU_122625_1_3_5"/>
<dbReference type="Proteomes" id="UP000000533">
    <property type="component" value="Chromosome"/>
</dbReference>
<dbReference type="GO" id="GO:1990904">
    <property type="term" value="C:ribonucleoprotein complex"/>
    <property type="evidence" value="ECO:0007669"/>
    <property type="project" value="UniProtKB-KW"/>
</dbReference>
<dbReference type="GO" id="GO:0005840">
    <property type="term" value="C:ribosome"/>
    <property type="evidence" value="ECO:0007669"/>
    <property type="project" value="UniProtKB-KW"/>
</dbReference>
<dbReference type="GO" id="GO:0003735">
    <property type="term" value="F:structural constituent of ribosome"/>
    <property type="evidence" value="ECO:0007669"/>
    <property type="project" value="InterPro"/>
</dbReference>
<dbReference type="GO" id="GO:0000049">
    <property type="term" value="F:tRNA binding"/>
    <property type="evidence" value="ECO:0007669"/>
    <property type="project" value="UniProtKB-UniRule"/>
</dbReference>
<dbReference type="GO" id="GO:0006412">
    <property type="term" value="P:translation"/>
    <property type="evidence" value="ECO:0007669"/>
    <property type="project" value="UniProtKB-UniRule"/>
</dbReference>
<dbReference type="FunFam" id="3.30.70.600:FF:000003">
    <property type="entry name" value="30S ribosomal protein S10"/>
    <property type="match status" value="1"/>
</dbReference>
<dbReference type="Gene3D" id="3.30.70.600">
    <property type="entry name" value="Ribosomal protein S10 domain"/>
    <property type="match status" value="1"/>
</dbReference>
<dbReference type="HAMAP" id="MF_00508">
    <property type="entry name" value="Ribosomal_uS10"/>
    <property type="match status" value="1"/>
</dbReference>
<dbReference type="InterPro" id="IPR001848">
    <property type="entry name" value="Ribosomal_uS10"/>
</dbReference>
<dbReference type="InterPro" id="IPR027486">
    <property type="entry name" value="Ribosomal_uS10_dom"/>
</dbReference>
<dbReference type="InterPro" id="IPR036838">
    <property type="entry name" value="Ribosomal_uS10_dom_sf"/>
</dbReference>
<dbReference type="NCBIfam" id="NF001861">
    <property type="entry name" value="PRK00596.1"/>
    <property type="match status" value="1"/>
</dbReference>
<dbReference type="NCBIfam" id="TIGR01049">
    <property type="entry name" value="rpsJ_bact"/>
    <property type="match status" value="1"/>
</dbReference>
<dbReference type="PANTHER" id="PTHR11700">
    <property type="entry name" value="30S RIBOSOMAL PROTEIN S10 FAMILY MEMBER"/>
    <property type="match status" value="1"/>
</dbReference>
<dbReference type="Pfam" id="PF00338">
    <property type="entry name" value="Ribosomal_S10"/>
    <property type="match status" value="1"/>
</dbReference>
<dbReference type="PRINTS" id="PR00971">
    <property type="entry name" value="RIBOSOMALS10"/>
</dbReference>
<dbReference type="SMART" id="SM01403">
    <property type="entry name" value="Ribosomal_S10"/>
    <property type="match status" value="1"/>
</dbReference>
<dbReference type="SUPFAM" id="SSF54999">
    <property type="entry name" value="Ribosomal protein S10"/>
    <property type="match status" value="1"/>
</dbReference>
<comment type="function">
    <text evidence="1">Involved in the binding of tRNA to the ribosomes.</text>
</comment>
<comment type="subunit">
    <text evidence="1">Part of the 30S ribosomal subunit.</text>
</comment>
<comment type="similarity">
    <text evidence="1">Belongs to the universal ribosomal protein uS10 family.</text>
</comment>
<evidence type="ECO:0000255" key="1">
    <source>
        <dbReference type="HAMAP-Rule" id="MF_00508"/>
    </source>
</evidence>
<evidence type="ECO:0000305" key="2"/>
<organism>
    <name type="scientific">Ehrlichia ruminantium (strain Gardel)</name>
    <dbReference type="NCBI Taxonomy" id="302409"/>
    <lineage>
        <taxon>Bacteria</taxon>
        <taxon>Pseudomonadati</taxon>
        <taxon>Pseudomonadota</taxon>
        <taxon>Alphaproteobacteria</taxon>
        <taxon>Rickettsiales</taxon>
        <taxon>Anaplasmataceae</taxon>
        <taxon>Ehrlichia</taxon>
    </lineage>
</organism>
<accession>Q5FFT9</accession>
<sequence>MVMVTQKIYIELKAFDSYLLDRSARSIILTAKRSGARVNGPIFFPRRVAKFIVNRSTHVDKKSREQFEIRTHKRLISLPKANSTIIQALMSLQLPAGVDVKVKVIGGSNG</sequence>
<keyword id="KW-0687">Ribonucleoprotein</keyword>
<keyword id="KW-0689">Ribosomal protein</keyword>
<reference key="1">
    <citation type="journal article" date="2006" name="J. Bacteriol.">
        <title>Comparative genomic analysis of three strains of Ehrlichia ruminantium reveals an active process of genome size plasticity.</title>
        <authorList>
            <person name="Frutos R."/>
            <person name="Viari A."/>
            <person name="Ferraz C."/>
            <person name="Morgat A."/>
            <person name="Eychenie S."/>
            <person name="Kandassamy Y."/>
            <person name="Chantal I."/>
            <person name="Bensaid A."/>
            <person name="Coissac E."/>
            <person name="Vachiery N."/>
            <person name="Demaille J."/>
            <person name="Martinez D."/>
        </authorList>
    </citation>
    <scope>NUCLEOTIDE SEQUENCE [LARGE SCALE GENOMIC DNA]</scope>
    <source>
        <strain>Gardel</strain>
    </source>
</reference>